<proteinExistence type="inferred from homology"/>
<comment type="function">
    <text evidence="1">Plays a role in the initiation of viral DNA replication. A dimer of E2 interacts with a dimer of E1 in order to improve specificity of E1 DNA binding activity. Once the complex recognizes and binds DNA at specific sites, the E2 dimer is removed from DNA. E2 also regulates viral transcription through binding to the E2RE response element (5'-ACCNNNNNNGGT-3') present in multiple copies in the regulatory regions of the viral genome. Activates or represses transcription depending on E2RE's position with regards to proximal promoter elements including the TATA-box. Repression occurs by sterically hindering the assembly of the transcription initiation complex.</text>
</comment>
<comment type="subunit">
    <text evidence="1">Binds DNA as homodimer. Interacts with protein E1; this interaction greatly increases E1 DNA-binding activity. Interacts with protein L1; this interaction enhances E2-dependent replication and transcription activation. Interacts with protein L2; this interaction inhibits E2 transcriptional activity but not DNA replication function E2. Interacts with protein E7; this interaction inhibits E7 oncogenic activity. Interacts with host TAF1; this interaction modulates E2-dependent transcriptional regulation. Interacts with host BRD4; this interaction mediates E2 transcriptional activation function. Additionally, the interaction with host BRD4 on mitotic chromosomes mediates tethering of the viral genome. Interacts with host TOPBP1; this interaction is required for optimal viral DNA replication.</text>
</comment>
<comment type="subcellular location">
    <subcellularLocation>
        <location evidence="1">Host nucleus</location>
    </subcellularLocation>
</comment>
<comment type="PTM">
    <text evidence="1">Phosphorylated.</text>
</comment>
<comment type="similarity">
    <text evidence="1">Belongs to the papillomaviridae E2 protein family.</text>
</comment>
<evidence type="ECO:0000255" key="1">
    <source>
        <dbReference type="HAMAP-Rule" id="MF_04001"/>
    </source>
</evidence>
<evidence type="ECO:0000256" key="2">
    <source>
        <dbReference type="SAM" id="MobiDB-lite"/>
    </source>
</evidence>
<organismHost>
    <name type="scientific">Homo sapiens</name>
    <name type="common">Human</name>
    <dbReference type="NCBI Taxonomy" id="9606"/>
</organismHost>
<reference key="1">
    <citation type="journal article" date="1994" name="Curr. Top. Microbiol. Immunol.">
        <title>Primer-directed sequencing of human papillomavirus types.</title>
        <authorList>
            <person name="Delius H."/>
            <person name="Hofmann B."/>
        </authorList>
    </citation>
    <scope>NUCLEOTIDE SEQUENCE [GENOMIC DNA]</scope>
</reference>
<organism>
    <name type="scientific">Human papillomavirus type 49</name>
    <dbReference type="NCBI Taxonomy" id="10616"/>
    <lineage>
        <taxon>Viruses</taxon>
        <taxon>Monodnaviria</taxon>
        <taxon>Shotokuvirae</taxon>
        <taxon>Cossaviricota</taxon>
        <taxon>Papovaviricetes</taxon>
        <taxon>Zurhausenvirales</taxon>
        <taxon>Papillomaviridae</taxon>
        <taxon>Firstpapillomavirinae</taxon>
        <taxon>Betapapillomavirus</taxon>
        <taxon>Betapapillomavirus 3</taxon>
    </lineage>
</organism>
<feature type="chain" id="PRO_0000133227" description="Regulatory protein E2">
    <location>
        <begin position="1"/>
        <end position="488"/>
    </location>
</feature>
<feature type="region of interest" description="Transactivation domain" evidence="1">
    <location>
        <begin position="1"/>
        <end position="201"/>
    </location>
</feature>
<feature type="region of interest" description="Disordered" evidence="2">
    <location>
        <begin position="196"/>
        <end position="384"/>
    </location>
</feature>
<feature type="region of interest" description="DNA-binding domain" evidence="1">
    <location>
        <begin position="404"/>
        <end position="488"/>
    </location>
</feature>
<feature type="compositionally biased region" description="Polar residues" evidence="2">
    <location>
        <begin position="196"/>
        <end position="215"/>
    </location>
</feature>
<feature type="compositionally biased region" description="Low complexity" evidence="2">
    <location>
        <begin position="224"/>
        <end position="245"/>
    </location>
</feature>
<feature type="compositionally biased region" description="Basic residues" evidence="2">
    <location>
        <begin position="278"/>
        <end position="291"/>
    </location>
</feature>
<feature type="compositionally biased region" description="Basic residues" evidence="2">
    <location>
        <begin position="301"/>
        <end position="311"/>
    </location>
</feature>
<feature type="compositionally biased region" description="Low complexity" evidence="2">
    <location>
        <begin position="312"/>
        <end position="328"/>
    </location>
</feature>
<feature type="compositionally biased region" description="Basic residues" evidence="2">
    <location>
        <begin position="332"/>
        <end position="346"/>
    </location>
</feature>
<gene>
    <name evidence="1" type="primary">E2</name>
</gene>
<accession>P36795</accession>
<protein>
    <recommendedName>
        <fullName evidence="1">Regulatory protein E2</fullName>
    </recommendedName>
</protein>
<name>VE2_HPV49</name>
<keyword id="KW-0010">Activator</keyword>
<keyword id="KW-0235">DNA replication</keyword>
<keyword id="KW-0238">DNA-binding</keyword>
<keyword id="KW-0244">Early protein</keyword>
<keyword id="KW-1048">Host nucleus</keyword>
<keyword id="KW-0597">Phosphoprotein</keyword>
<keyword id="KW-0678">Repressor</keyword>
<keyword id="KW-0804">Transcription</keyword>
<keyword id="KW-0805">Transcription regulation</keyword>
<dbReference type="EMBL" id="X74480">
    <property type="protein sequence ID" value="CAA52582.1"/>
    <property type="molecule type" value="Genomic_DNA"/>
</dbReference>
<dbReference type="PIR" id="S36570">
    <property type="entry name" value="S36570"/>
</dbReference>
<dbReference type="RefSeq" id="NP_041835.1">
    <property type="nucleotide sequence ID" value="NC_001591.1"/>
</dbReference>
<dbReference type="SMR" id="P36795"/>
<dbReference type="GeneID" id="1489443"/>
<dbReference type="KEGG" id="vg:1489443"/>
<dbReference type="OrthoDB" id="15886at10239"/>
<dbReference type="Proteomes" id="UP000009124">
    <property type="component" value="Genome"/>
</dbReference>
<dbReference type="GO" id="GO:0042025">
    <property type="term" value="C:host cell nucleus"/>
    <property type="evidence" value="ECO:0007669"/>
    <property type="project" value="UniProtKB-SubCell"/>
</dbReference>
<dbReference type="GO" id="GO:0003677">
    <property type="term" value="F:DNA binding"/>
    <property type="evidence" value="ECO:0007669"/>
    <property type="project" value="UniProtKB-UniRule"/>
</dbReference>
<dbReference type="GO" id="GO:0003700">
    <property type="term" value="F:DNA-binding transcription factor activity"/>
    <property type="evidence" value="ECO:0007669"/>
    <property type="project" value="UniProtKB-UniRule"/>
</dbReference>
<dbReference type="GO" id="GO:0000166">
    <property type="term" value="F:nucleotide binding"/>
    <property type="evidence" value="ECO:0007669"/>
    <property type="project" value="UniProtKB-UniRule"/>
</dbReference>
<dbReference type="GO" id="GO:0006260">
    <property type="term" value="P:DNA replication"/>
    <property type="evidence" value="ECO:0007669"/>
    <property type="project" value="UniProtKB-KW"/>
</dbReference>
<dbReference type="GO" id="GO:0006351">
    <property type="term" value="P:DNA-templated transcription"/>
    <property type="evidence" value="ECO:0007669"/>
    <property type="project" value="UniProtKB-UniRule"/>
</dbReference>
<dbReference type="GO" id="GO:0006275">
    <property type="term" value="P:regulation of DNA replication"/>
    <property type="evidence" value="ECO:0007669"/>
    <property type="project" value="UniProtKB-UniRule"/>
</dbReference>
<dbReference type="GO" id="GO:0039693">
    <property type="term" value="P:viral DNA genome replication"/>
    <property type="evidence" value="ECO:0007669"/>
    <property type="project" value="UniProtKB-UniRule"/>
</dbReference>
<dbReference type="Gene3D" id="3.30.70.330">
    <property type="match status" value="1"/>
</dbReference>
<dbReference type="Gene3D" id="1.10.287.30">
    <property type="entry name" value="E2 (early) protein, N terminal domain, subdomain 1"/>
    <property type="match status" value="1"/>
</dbReference>
<dbReference type="Gene3D" id="2.170.200.10">
    <property type="entry name" value="Papillomavirus E2 early protein domain"/>
    <property type="match status" value="1"/>
</dbReference>
<dbReference type="HAMAP" id="MF_04001">
    <property type="entry name" value="PPV_E2"/>
    <property type="match status" value="1"/>
</dbReference>
<dbReference type="InterPro" id="IPR035975">
    <property type="entry name" value="E2/EBNA1_C_sf"/>
</dbReference>
<dbReference type="InterPro" id="IPR012677">
    <property type="entry name" value="Nucleotide-bd_a/b_plait_sf"/>
</dbReference>
<dbReference type="InterPro" id="IPR000427">
    <property type="entry name" value="Papillomavirus_E2_C"/>
</dbReference>
<dbReference type="InterPro" id="IPR001866">
    <property type="entry name" value="PPV_E2_N"/>
</dbReference>
<dbReference type="InterPro" id="IPR033668">
    <property type="entry name" value="Reg_prot_E2"/>
</dbReference>
<dbReference type="InterPro" id="IPR036050">
    <property type="entry name" value="Regulatory_protein_E2_N"/>
</dbReference>
<dbReference type="InterPro" id="IPR042503">
    <property type="entry name" value="Regulatory_protein_E2_N_1"/>
</dbReference>
<dbReference type="InterPro" id="IPR042504">
    <property type="entry name" value="Regulatory_protein_E2_N_2"/>
</dbReference>
<dbReference type="Pfam" id="PF00511">
    <property type="entry name" value="PPV_E2_C"/>
    <property type="match status" value="1"/>
</dbReference>
<dbReference type="Pfam" id="PF00508">
    <property type="entry name" value="PPV_E2_N"/>
    <property type="match status" value="1"/>
</dbReference>
<dbReference type="SUPFAM" id="SSF51332">
    <property type="entry name" value="E2 regulatory, transactivation domain"/>
    <property type="match status" value="1"/>
</dbReference>
<dbReference type="SUPFAM" id="SSF54957">
    <property type="entry name" value="Viral DNA-binding domain"/>
    <property type="match status" value="1"/>
</dbReference>
<sequence>MEALNARFNVLQEMLMDIYESGKEDLETQIEHWKLLRQEQALLFFARKHSIMRLGYQPVPPMAVSETKAKQAIGMMLTLQSLQKSPFGKEKWTLVNTSLETYNAPPAQCFKKGPYNIEVIFDGDPENLMVYTAWKEIYFVDSDDMWQKVQGEVDYAGAYYKDGTIKQYYVTFADDAVRYGTSGQYEVRINNETVFAPVTSSTPPSTGLRESSNASPVHDTVDETPTSTTATTTTFSTTTATATATGAPELSSKTGTRKGRYGRKDSSPTAASNSRKEVSRRRSRSRTRTRRREASTSRSQKASRSRSRSRSTSRGSRGSGGSVTTSRDSSPKRTRRGRGRGGRSRRSPTPTSTSKRERRRSRSRGGEPVSGGVGISPDKVGSRVQTVSGRHLGRLGRLLEEASDPPVILLRGDPNILKCYRYRDKKRKLGLVKHYSTTWSWVGVDGNERIGRSRMLLSFTSNSTRSQYVKIMKLPKGVEWSFGNFDKL</sequence>